<comment type="function">
    <text evidence="1">Responsible for synthesis of pseudouridine from uracil-55 in the psi GC loop of transfer RNAs.</text>
</comment>
<comment type="catalytic activity">
    <reaction evidence="1">
        <text>uridine(55) in tRNA = pseudouridine(55) in tRNA</text>
        <dbReference type="Rhea" id="RHEA:42532"/>
        <dbReference type="Rhea" id="RHEA-COMP:10101"/>
        <dbReference type="Rhea" id="RHEA-COMP:10102"/>
        <dbReference type="ChEBI" id="CHEBI:65314"/>
        <dbReference type="ChEBI" id="CHEBI:65315"/>
        <dbReference type="EC" id="5.4.99.25"/>
    </reaction>
</comment>
<comment type="similarity">
    <text evidence="1">Belongs to the pseudouridine synthase TruB family. Type 1 subfamily.</text>
</comment>
<reference key="1">
    <citation type="submission" date="2006-10" db="EMBL/GenBank/DDBJ databases">
        <title>Complete sequence of Syntrophobacter fumaroxidans MPOB.</title>
        <authorList>
            <consortium name="US DOE Joint Genome Institute"/>
            <person name="Copeland A."/>
            <person name="Lucas S."/>
            <person name="Lapidus A."/>
            <person name="Barry K."/>
            <person name="Detter J.C."/>
            <person name="Glavina del Rio T."/>
            <person name="Hammon N."/>
            <person name="Israni S."/>
            <person name="Pitluck S."/>
            <person name="Goltsman E.G."/>
            <person name="Martinez M."/>
            <person name="Schmutz J."/>
            <person name="Larimer F."/>
            <person name="Land M."/>
            <person name="Hauser L."/>
            <person name="Kyrpides N."/>
            <person name="Kim E."/>
            <person name="Boone D.R."/>
            <person name="Brockman F."/>
            <person name="Culley D."/>
            <person name="Ferry J."/>
            <person name="Gunsalus R."/>
            <person name="McInerney M.J."/>
            <person name="Morrison M."/>
            <person name="Plugge C."/>
            <person name="Rohlin L."/>
            <person name="Scholten J."/>
            <person name="Sieber J."/>
            <person name="Stams A.J.M."/>
            <person name="Worm P."/>
            <person name="Henstra A.M."/>
            <person name="Richardson P."/>
        </authorList>
    </citation>
    <scope>NUCLEOTIDE SEQUENCE [LARGE SCALE GENOMIC DNA]</scope>
    <source>
        <strain>DSM 10017 / MPOB</strain>
    </source>
</reference>
<gene>
    <name evidence="1" type="primary">truB</name>
    <name type="ordered locus">Sfum_1232</name>
</gene>
<evidence type="ECO:0000255" key="1">
    <source>
        <dbReference type="HAMAP-Rule" id="MF_01080"/>
    </source>
</evidence>
<sequence>MREKEPSGLLVLDKPEGMTSSTLVTRVKRLLGLRKAGHCGTLDPFATGVLLVCVNQATRFAEQLTGQTKVYRFTARLGIETDTLDRTGTVVRTRDDVVPSERELLEAVRLHEGTQVQEVPRYAAVKVQGKRLYELARKGIDVELPRREVHIHRFDLISYRYPEVVLETKCSKGTYVRQLAADLGRRLGCGAHVMHLRRLACGPFGLERASSLEQMHDGASDGSWLAKLVPMADALSHLPALTIEDGQVLSRLRYGQLDADWEAEHSGRFSRRVGPVRIVTADGRLAALWWPWPESEHQRRLRVFQL</sequence>
<proteinExistence type="inferred from homology"/>
<name>TRUB_SYNFM</name>
<accession>A0LHM2</accession>
<feature type="chain" id="PRO_1000136818" description="tRNA pseudouridine synthase B">
    <location>
        <begin position="1"/>
        <end position="306"/>
    </location>
</feature>
<feature type="active site" description="Nucleophile" evidence="1">
    <location>
        <position position="43"/>
    </location>
</feature>
<organism>
    <name type="scientific">Syntrophobacter fumaroxidans (strain DSM 10017 / MPOB)</name>
    <dbReference type="NCBI Taxonomy" id="335543"/>
    <lineage>
        <taxon>Bacteria</taxon>
        <taxon>Pseudomonadati</taxon>
        <taxon>Thermodesulfobacteriota</taxon>
        <taxon>Syntrophobacteria</taxon>
        <taxon>Syntrophobacterales</taxon>
        <taxon>Syntrophobacteraceae</taxon>
        <taxon>Syntrophobacter</taxon>
    </lineage>
</organism>
<dbReference type="EC" id="5.4.99.25" evidence="1"/>
<dbReference type="EMBL" id="CP000478">
    <property type="protein sequence ID" value="ABK16924.1"/>
    <property type="molecule type" value="Genomic_DNA"/>
</dbReference>
<dbReference type="SMR" id="A0LHM2"/>
<dbReference type="FunCoup" id="A0LHM2">
    <property type="interactions" value="514"/>
</dbReference>
<dbReference type="STRING" id="335543.Sfum_1232"/>
<dbReference type="KEGG" id="sfu:Sfum_1232"/>
<dbReference type="eggNOG" id="COG0130">
    <property type="taxonomic scope" value="Bacteria"/>
</dbReference>
<dbReference type="HOGENOM" id="CLU_032087_0_0_7"/>
<dbReference type="InParanoid" id="A0LHM2"/>
<dbReference type="Proteomes" id="UP000001784">
    <property type="component" value="Chromosome"/>
</dbReference>
<dbReference type="GO" id="GO:0003723">
    <property type="term" value="F:RNA binding"/>
    <property type="evidence" value="ECO:0007669"/>
    <property type="project" value="InterPro"/>
</dbReference>
<dbReference type="GO" id="GO:0160148">
    <property type="term" value="F:tRNA pseudouridine(55) synthase activity"/>
    <property type="evidence" value="ECO:0007669"/>
    <property type="project" value="UniProtKB-EC"/>
</dbReference>
<dbReference type="GO" id="GO:1990481">
    <property type="term" value="P:mRNA pseudouridine synthesis"/>
    <property type="evidence" value="ECO:0007669"/>
    <property type="project" value="TreeGrafter"/>
</dbReference>
<dbReference type="GO" id="GO:0031119">
    <property type="term" value="P:tRNA pseudouridine synthesis"/>
    <property type="evidence" value="ECO:0007669"/>
    <property type="project" value="UniProtKB-UniRule"/>
</dbReference>
<dbReference type="CDD" id="cd02573">
    <property type="entry name" value="PseudoU_synth_EcTruB"/>
    <property type="match status" value="1"/>
</dbReference>
<dbReference type="Gene3D" id="3.30.2350.10">
    <property type="entry name" value="Pseudouridine synthase"/>
    <property type="match status" value="1"/>
</dbReference>
<dbReference type="HAMAP" id="MF_01080">
    <property type="entry name" value="TruB_bact"/>
    <property type="match status" value="1"/>
</dbReference>
<dbReference type="InterPro" id="IPR020103">
    <property type="entry name" value="PsdUridine_synth_cat_dom_sf"/>
</dbReference>
<dbReference type="InterPro" id="IPR002501">
    <property type="entry name" value="PsdUridine_synth_N"/>
</dbReference>
<dbReference type="InterPro" id="IPR014780">
    <property type="entry name" value="tRNA_psdUridine_synth_TruB"/>
</dbReference>
<dbReference type="InterPro" id="IPR032819">
    <property type="entry name" value="TruB_C"/>
</dbReference>
<dbReference type="NCBIfam" id="TIGR00431">
    <property type="entry name" value="TruB"/>
    <property type="match status" value="1"/>
</dbReference>
<dbReference type="PANTHER" id="PTHR13767:SF2">
    <property type="entry name" value="PSEUDOURIDYLATE SYNTHASE TRUB1"/>
    <property type="match status" value="1"/>
</dbReference>
<dbReference type="PANTHER" id="PTHR13767">
    <property type="entry name" value="TRNA-PSEUDOURIDINE SYNTHASE"/>
    <property type="match status" value="1"/>
</dbReference>
<dbReference type="Pfam" id="PF16198">
    <property type="entry name" value="TruB_C_2"/>
    <property type="match status" value="1"/>
</dbReference>
<dbReference type="Pfam" id="PF01509">
    <property type="entry name" value="TruB_N"/>
    <property type="match status" value="1"/>
</dbReference>
<dbReference type="SUPFAM" id="SSF55120">
    <property type="entry name" value="Pseudouridine synthase"/>
    <property type="match status" value="1"/>
</dbReference>
<keyword id="KW-0413">Isomerase</keyword>
<keyword id="KW-1185">Reference proteome</keyword>
<keyword id="KW-0819">tRNA processing</keyword>
<protein>
    <recommendedName>
        <fullName evidence="1">tRNA pseudouridine synthase B</fullName>
        <ecNumber evidence="1">5.4.99.25</ecNumber>
    </recommendedName>
    <alternativeName>
        <fullName evidence="1">tRNA pseudouridine(55) synthase</fullName>
        <shortName evidence="1">Psi55 synthase</shortName>
    </alternativeName>
    <alternativeName>
        <fullName evidence="1">tRNA pseudouridylate synthase</fullName>
    </alternativeName>
    <alternativeName>
        <fullName evidence="1">tRNA-uridine isomerase</fullName>
    </alternativeName>
</protein>